<name>ATG12_MEDTR</name>
<accession>Q1SF86</accession>
<reference key="1">
    <citation type="submission" date="2007-02" db="EMBL/GenBank/DDBJ databases">
        <authorList>
            <consortium name="The international Medicago genome annotation group"/>
        </authorList>
    </citation>
    <scope>NUCLEOTIDE SEQUENCE [LARGE SCALE GENOMIC DNA]</scope>
</reference>
<sequence>MAAAESPTSVRKVVVHLRATGDAPILKQSKFKIAGTDKFAKVIDFLRRQLHRESLFVYVNSAFSPNPDELVIDLYNNFGFDGKLVVNYACSMAWG</sequence>
<comment type="function">
    <text evidence="1">Ubiquitin-like protein involved in cytoplasm to vacuole transport (Cvt) and autophagy vesicles formation. Conjugation with ATG5 through a ubiquitin-like conjugating system is essential for its function. ATG12/ATG5 conjugate has an essential role in plant nutrient recycling (By similarity).</text>
</comment>
<comment type="subcellular location">
    <subcellularLocation>
        <location evidence="1">Cytoplasm</location>
    </subcellularLocation>
</comment>
<comment type="similarity">
    <text evidence="2">Belongs to the ATG12 family.</text>
</comment>
<feature type="chain" id="PRO_0000287216" description="Ubiquitin-like protein ATG12">
    <location>
        <begin position="1"/>
        <end position="95"/>
    </location>
</feature>
<feature type="cross-link" description="Glycyl lysine isopeptide (Gly-Lys) (interchain with K-? in ATG5)" evidence="1">
    <location>
        <position position="95"/>
    </location>
</feature>
<gene>
    <name type="primary">ATG12</name>
    <name type="synonym">APG12</name>
</gene>
<evidence type="ECO:0000250" key="1"/>
<evidence type="ECO:0000305" key="2"/>
<keyword id="KW-0072">Autophagy</keyword>
<keyword id="KW-0963">Cytoplasm</keyword>
<keyword id="KW-1017">Isopeptide bond</keyword>
<keyword id="KW-0653">Protein transport</keyword>
<keyword id="KW-0813">Transport</keyword>
<keyword id="KW-0833">Ubl conjugation pathway</keyword>
<dbReference type="EMBL" id="AC144645">
    <property type="status" value="NOT_ANNOTATED_CDS"/>
    <property type="molecule type" value="Genomic_DNA"/>
</dbReference>
<dbReference type="RefSeq" id="XP_003627265.1">
    <property type="nucleotide sequence ID" value="XM_003627217.2"/>
</dbReference>
<dbReference type="SMR" id="Q1SF86"/>
<dbReference type="PaxDb" id="3880-AET01741"/>
<dbReference type="EnsemblPlants" id="rna45464">
    <property type="protein sequence ID" value="RHN39442.1"/>
    <property type="gene ID" value="gene45464"/>
</dbReference>
<dbReference type="GeneID" id="11423981"/>
<dbReference type="Gramene" id="rna45464">
    <property type="protein sequence ID" value="RHN39442.1"/>
    <property type="gene ID" value="gene45464"/>
</dbReference>
<dbReference type="KEGG" id="mtr:11423981"/>
<dbReference type="eggNOG" id="KOG3439">
    <property type="taxonomic scope" value="Eukaryota"/>
</dbReference>
<dbReference type="HOGENOM" id="CLU_106795_3_1_1"/>
<dbReference type="OMA" id="YAKTHAW"/>
<dbReference type="OrthoDB" id="10003551at2759"/>
<dbReference type="ExpressionAtlas" id="Q1SF86">
    <property type="expression patterns" value="differential"/>
</dbReference>
<dbReference type="GO" id="GO:0005737">
    <property type="term" value="C:cytoplasm"/>
    <property type="evidence" value="ECO:0007669"/>
    <property type="project" value="UniProtKB-SubCell"/>
</dbReference>
<dbReference type="GO" id="GO:0000045">
    <property type="term" value="P:autophagosome assembly"/>
    <property type="evidence" value="ECO:0007669"/>
    <property type="project" value="InterPro"/>
</dbReference>
<dbReference type="GO" id="GO:0015031">
    <property type="term" value="P:protein transport"/>
    <property type="evidence" value="ECO:0007669"/>
    <property type="project" value="UniProtKB-KW"/>
</dbReference>
<dbReference type="CDD" id="cd01612">
    <property type="entry name" value="Ubl_ATG12"/>
    <property type="match status" value="1"/>
</dbReference>
<dbReference type="FunFam" id="3.10.20.90:FF:000150">
    <property type="entry name" value="Ubiquitin-like protein ATG12"/>
    <property type="match status" value="1"/>
</dbReference>
<dbReference type="Gene3D" id="3.10.20.90">
    <property type="entry name" value="Phosphatidylinositol 3-kinase Catalytic Subunit, Chain A, domain 1"/>
    <property type="match status" value="1"/>
</dbReference>
<dbReference type="InterPro" id="IPR007242">
    <property type="entry name" value="Atg12"/>
</dbReference>
<dbReference type="InterPro" id="IPR029071">
    <property type="entry name" value="Ubiquitin-like_domsf"/>
</dbReference>
<dbReference type="PANTHER" id="PTHR13385">
    <property type="entry name" value="AUTOPHAGY PROTEIN 12"/>
    <property type="match status" value="1"/>
</dbReference>
<dbReference type="PANTHER" id="PTHR13385:SF0">
    <property type="entry name" value="UBIQUITIN-LIKE PROTEIN ATG12"/>
    <property type="match status" value="1"/>
</dbReference>
<dbReference type="Pfam" id="PF04110">
    <property type="entry name" value="APG12"/>
    <property type="match status" value="1"/>
</dbReference>
<dbReference type="SUPFAM" id="SSF54236">
    <property type="entry name" value="Ubiquitin-like"/>
    <property type="match status" value="1"/>
</dbReference>
<organism>
    <name type="scientific">Medicago truncatula</name>
    <name type="common">Barrel medic</name>
    <name type="synonym">Medicago tribuloides</name>
    <dbReference type="NCBI Taxonomy" id="3880"/>
    <lineage>
        <taxon>Eukaryota</taxon>
        <taxon>Viridiplantae</taxon>
        <taxon>Streptophyta</taxon>
        <taxon>Embryophyta</taxon>
        <taxon>Tracheophyta</taxon>
        <taxon>Spermatophyta</taxon>
        <taxon>Magnoliopsida</taxon>
        <taxon>eudicotyledons</taxon>
        <taxon>Gunneridae</taxon>
        <taxon>Pentapetalae</taxon>
        <taxon>rosids</taxon>
        <taxon>fabids</taxon>
        <taxon>Fabales</taxon>
        <taxon>Fabaceae</taxon>
        <taxon>Papilionoideae</taxon>
        <taxon>50 kb inversion clade</taxon>
        <taxon>NPAAA clade</taxon>
        <taxon>Hologalegina</taxon>
        <taxon>IRL clade</taxon>
        <taxon>Trifolieae</taxon>
        <taxon>Medicago</taxon>
    </lineage>
</organism>
<protein>
    <recommendedName>
        <fullName>Ubiquitin-like protein ATG12</fullName>
    </recommendedName>
    <alternativeName>
        <fullName>Autophagy-related protein 12</fullName>
        <shortName>APG12-like</shortName>
    </alternativeName>
</protein>
<proteinExistence type="inferred from homology"/>